<reference key="1">
    <citation type="journal article" date="2011" name="J. Bacteriol.">
        <title>Comparative genomics of 28 Salmonella enterica isolates: evidence for CRISPR-mediated adaptive sublineage evolution.</title>
        <authorList>
            <person name="Fricke W.F."/>
            <person name="Mammel M.K."/>
            <person name="McDermott P.F."/>
            <person name="Tartera C."/>
            <person name="White D.G."/>
            <person name="Leclerc J.E."/>
            <person name="Ravel J."/>
            <person name="Cebula T.A."/>
        </authorList>
    </citation>
    <scope>NUCLEOTIDE SEQUENCE [LARGE SCALE GENOMIC DNA]</scope>
    <source>
        <strain>SL476</strain>
    </source>
</reference>
<protein>
    <recommendedName>
        <fullName evidence="1">Flagellar protein FliT</fullName>
    </recommendedName>
</protein>
<comment type="function">
    <text evidence="1">Dual-function protein that regulates the transcription of class 2 flagellar operons and that also acts as an export chaperone for the filament-capping protein FliD. As a transcriptional regulator, acts as an anti-FlhDC factor; it directly binds FlhC, thus inhibiting the binding of the FlhC/FlhD complex to class 2 promoters, resulting in decreased expression of class 2 flagellar operons. As a chaperone, effects FliD transition to the membrane by preventing its premature polymerization, and by directing it to the export apparatus.</text>
</comment>
<comment type="subunit">
    <text evidence="1">Homodimer. Interacts with FliD and FlhC.</text>
</comment>
<comment type="subcellular location">
    <subcellularLocation>
        <location evidence="1">Cytoplasm</location>
        <location evidence="1">Cytosol</location>
    </subcellularLocation>
</comment>
<comment type="similarity">
    <text evidence="1">Belongs to the FliT family.</text>
</comment>
<name>FLIT_SALHS</name>
<sequence>MTSTVEFINRWQRIALLSQSLLELAQRGEWDLLLQQEVSYLQSIETVMEKQTPPGITRSIQDMVAGYIKQTLDNEQLLKGLLQQRLDELSSLIGQSTRQKSLNNAYGRLSGMLLVPDAPGAS</sequence>
<evidence type="ECO:0000255" key="1">
    <source>
        <dbReference type="HAMAP-Rule" id="MF_01180"/>
    </source>
</evidence>
<accession>B4T857</accession>
<organism>
    <name type="scientific">Salmonella heidelberg (strain SL476)</name>
    <dbReference type="NCBI Taxonomy" id="454169"/>
    <lineage>
        <taxon>Bacteria</taxon>
        <taxon>Pseudomonadati</taxon>
        <taxon>Pseudomonadota</taxon>
        <taxon>Gammaproteobacteria</taxon>
        <taxon>Enterobacterales</taxon>
        <taxon>Enterobacteriaceae</taxon>
        <taxon>Salmonella</taxon>
    </lineage>
</organism>
<keyword id="KW-1005">Bacterial flagellum biogenesis</keyword>
<keyword id="KW-0143">Chaperone</keyword>
<keyword id="KW-0963">Cytoplasm</keyword>
<keyword id="KW-0678">Repressor</keyword>
<keyword id="KW-0804">Transcription</keyword>
<keyword id="KW-0805">Transcription regulation</keyword>
<feature type="chain" id="PRO_1000138184" description="Flagellar protein FliT">
    <location>
        <begin position="1"/>
        <end position="122"/>
    </location>
</feature>
<feature type="region of interest" description="Required for homodimerization" evidence="1">
    <location>
        <begin position="1"/>
        <end position="50"/>
    </location>
</feature>
<feature type="region of interest" description="FliD binding" evidence="1">
    <location>
        <begin position="60"/>
        <end position="98"/>
    </location>
</feature>
<dbReference type="EMBL" id="CP001120">
    <property type="protein sequence ID" value="ACF68620.1"/>
    <property type="molecule type" value="Genomic_DNA"/>
</dbReference>
<dbReference type="RefSeq" id="WP_000204899.1">
    <property type="nucleotide sequence ID" value="NC_011083.1"/>
</dbReference>
<dbReference type="SMR" id="B4T857"/>
<dbReference type="KEGG" id="seh:SeHA_C2177"/>
<dbReference type="HOGENOM" id="CLU_155793_1_0_6"/>
<dbReference type="Proteomes" id="UP000001866">
    <property type="component" value="Chromosome"/>
</dbReference>
<dbReference type="GO" id="GO:0005829">
    <property type="term" value="C:cytosol"/>
    <property type="evidence" value="ECO:0007669"/>
    <property type="project" value="UniProtKB-SubCell"/>
</dbReference>
<dbReference type="GO" id="GO:0044781">
    <property type="term" value="P:bacterial-type flagellum organization"/>
    <property type="evidence" value="ECO:0007669"/>
    <property type="project" value="UniProtKB-KW"/>
</dbReference>
<dbReference type="GO" id="GO:1902209">
    <property type="term" value="P:negative regulation of bacterial-type flagellum assembly"/>
    <property type="evidence" value="ECO:0007669"/>
    <property type="project" value="UniProtKB-UniRule"/>
</dbReference>
<dbReference type="GO" id="GO:0006457">
    <property type="term" value="P:protein folding"/>
    <property type="evidence" value="ECO:0007669"/>
    <property type="project" value="UniProtKB-UniRule"/>
</dbReference>
<dbReference type="FunFam" id="1.20.58.380:FF:000002">
    <property type="entry name" value="Flagellar protein FliT"/>
    <property type="match status" value="1"/>
</dbReference>
<dbReference type="Gene3D" id="1.20.58.380">
    <property type="entry name" value="Flagellar protein flit"/>
    <property type="match status" value="1"/>
</dbReference>
<dbReference type="HAMAP" id="MF_01180">
    <property type="entry name" value="FliT"/>
    <property type="match status" value="1"/>
</dbReference>
<dbReference type="InterPro" id="IPR008622">
    <property type="entry name" value="FliT"/>
</dbReference>
<dbReference type="NCBIfam" id="NF007836">
    <property type="entry name" value="PRK10548.1"/>
    <property type="match status" value="1"/>
</dbReference>
<dbReference type="Pfam" id="PF05400">
    <property type="entry name" value="FliT"/>
    <property type="match status" value="1"/>
</dbReference>
<proteinExistence type="inferred from homology"/>
<gene>
    <name evidence="1" type="primary">fliT</name>
    <name type="ordered locus">SeHA_C2177</name>
</gene>